<sequence>MANRLKEKYLNEVVPALTEQFNYSSVMAVPKVDKIVLNMGVGEAVSNAKSLEKAAEELALISGQKPLITKAKKSIAGFRLREGVAIGAKVTLRGERMYEFLDKLVSVSLPRVRDFHGVPTKSFDGRGNYTLGVKEQLIFPEINFDDVDKTRGLDIVIVTTANTDEESRALLTGLGMPFAK</sequence>
<feature type="chain" id="PRO_1000052838" description="Large ribosomal subunit protein uL5">
    <location>
        <begin position="1"/>
        <end position="180"/>
    </location>
</feature>
<accession>Q04MM4</accession>
<gene>
    <name evidence="1" type="primary">rplE</name>
    <name type="ordered locus">SPD_0205</name>
</gene>
<dbReference type="EMBL" id="CP000410">
    <property type="protein sequence ID" value="ABJ53730.1"/>
    <property type="molecule type" value="Genomic_DNA"/>
</dbReference>
<dbReference type="RefSeq" id="WP_000013542.1">
    <property type="nucleotide sequence ID" value="NZ_JAMLJR010000002.1"/>
</dbReference>
<dbReference type="SMR" id="Q04MM4"/>
<dbReference type="PaxDb" id="373153-SPD_0205"/>
<dbReference type="GeneID" id="93738969"/>
<dbReference type="KEGG" id="spd:SPD_0205"/>
<dbReference type="eggNOG" id="COG0094">
    <property type="taxonomic scope" value="Bacteria"/>
</dbReference>
<dbReference type="HOGENOM" id="CLU_061015_2_1_9"/>
<dbReference type="BioCyc" id="SPNE373153:G1G6V-228-MONOMER"/>
<dbReference type="Proteomes" id="UP000001452">
    <property type="component" value="Chromosome"/>
</dbReference>
<dbReference type="GO" id="GO:1990904">
    <property type="term" value="C:ribonucleoprotein complex"/>
    <property type="evidence" value="ECO:0007669"/>
    <property type="project" value="UniProtKB-KW"/>
</dbReference>
<dbReference type="GO" id="GO:0005840">
    <property type="term" value="C:ribosome"/>
    <property type="evidence" value="ECO:0007669"/>
    <property type="project" value="UniProtKB-KW"/>
</dbReference>
<dbReference type="GO" id="GO:0019843">
    <property type="term" value="F:rRNA binding"/>
    <property type="evidence" value="ECO:0007669"/>
    <property type="project" value="UniProtKB-UniRule"/>
</dbReference>
<dbReference type="GO" id="GO:0003735">
    <property type="term" value="F:structural constituent of ribosome"/>
    <property type="evidence" value="ECO:0007669"/>
    <property type="project" value="InterPro"/>
</dbReference>
<dbReference type="GO" id="GO:0000049">
    <property type="term" value="F:tRNA binding"/>
    <property type="evidence" value="ECO:0007669"/>
    <property type="project" value="UniProtKB-UniRule"/>
</dbReference>
<dbReference type="GO" id="GO:0006412">
    <property type="term" value="P:translation"/>
    <property type="evidence" value="ECO:0007669"/>
    <property type="project" value="UniProtKB-UniRule"/>
</dbReference>
<dbReference type="FunFam" id="3.30.1440.10:FF:000001">
    <property type="entry name" value="50S ribosomal protein L5"/>
    <property type="match status" value="1"/>
</dbReference>
<dbReference type="Gene3D" id="3.30.1440.10">
    <property type="match status" value="1"/>
</dbReference>
<dbReference type="HAMAP" id="MF_01333_B">
    <property type="entry name" value="Ribosomal_uL5_B"/>
    <property type="match status" value="1"/>
</dbReference>
<dbReference type="InterPro" id="IPR002132">
    <property type="entry name" value="Ribosomal_uL5"/>
</dbReference>
<dbReference type="InterPro" id="IPR020930">
    <property type="entry name" value="Ribosomal_uL5_bac-type"/>
</dbReference>
<dbReference type="InterPro" id="IPR031309">
    <property type="entry name" value="Ribosomal_uL5_C"/>
</dbReference>
<dbReference type="InterPro" id="IPR020929">
    <property type="entry name" value="Ribosomal_uL5_CS"/>
</dbReference>
<dbReference type="InterPro" id="IPR022803">
    <property type="entry name" value="Ribosomal_uL5_dom_sf"/>
</dbReference>
<dbReference type="InterPro" id="IPR031310">
    <property type="entry name" value="Ribosomal_uL5_N"/>
</dbReference>
<dbReference type="NCBIfam" id="NF000585">
    <property type="entry name" value="PRK00010.1"/>
    <property type="match status" value="1"/>
</dbReference>
<dbReference type="PANTHER" id="PTHR11994">
    <property type="entry name" value="60S RIBOSOMAL PROTEIN L11-RELATED"/>
    <property type="match status" value="1"/>
</dbReference>
<dbReference type="Pfam" id="PF00281">
    <property type="entry name" value="Ribosomal_L5"/>
    <property type="match status" value="1"/>
</dbReference>
<dbReference type="Pfam" id="PF00673">
    <property type="entry name" value="Ribosomal_L5_C"/>
    <property type="match status" value="1"/>
</dbReference>
<dbReference type="PIRSF" id="PIRSF002161">
    <property type="entry name" value="Ribosomal_L5"/>
    <property type="match status" value="1"/>
</dbReference>
<dbReference type="SUPFAM" id="SSF55282">
    <property type="entry name" value="RL5-like"/>
    <property type="match status" value="1"/>
</dbReference>
<dbReference type="PROSITE" id="PS00358">
    <property type="entry name" value="RIBOSOMAL_L5"/>
    <property type="match status" value="1"/>
</dbReference>
<evidence type="ECO:0000255" key="1">
    <source>
        <dbReference type="HAMAP-Rule" id="MF_01333"/>
    </source>
</evidence>
<evidence type="ECO:0000305" key="2"/>
<proteinExistence type="inferred from homology"/>
<name>RL5_STRP2</name>
<reference key="1">
    <citation type="journal article" date="2007" name="J. Bacteriol.">
        <title>Genome sequence of Avery's virulent serotype 2 strain D39 of Streptococcus pneumoniae and comparison with that of unencapsulated laboratory strain R6.</title>
        <authorList>
            <person name="Lanie J.A."/>
            <person name="Ng W.-L."/>
            <person name="Kazmierczak K.M."/>
            <person name="Andrzejewski T.M."/>
            <person name="Davidsen T.M."/>
            <person name="Wayne K.J."/>
            <person name="Tettelin H."/>
            <person name="Glass J.I."/>
            <person name="Winkler M.E."/>
        </authorList>
    </citation>
    <scope>NUCLEOTIDE SEQUENCE [LARGE SCALE GENOMIC DNA]</scope>
    <source>
        <strain>D39 / NCTC 7466</strain>
    </source>
</reference>
<keyword id="KW-1185">Reference proteome</keyword>
<keyword id="KW-0687">Ribonucleoprotein</keyword>
<keyword id="KW-0689">Ribosomal protein</keyword>
<keyword id="KW-0694">RNA-binding</keyword>
<keyword id="KW-0699">rRNA-binding</keyword>
<keyword id="KW-0820">tRNA-binding</keyword>
<protein>
    <recommendedName>
        <fullName evidence="1">Large ribosomal subunit protein uL5</fullName>
    </recommendedName>
    <alternativeName>
        <fullName evidence="2">50S ribosomal protein L5</fullName>
    </alternativeName>
</protein>
<comment type="function">
    <text evidence="1">This is one of the proteins that bind and probably mediate the attachment of the 5S RNA into the large ribosomal subunit, where it forms part of the central protuberance. In the 70S ribosome it contacts protein S13 of the 30S subunit (bridge B1b), connecting the 2 subunits; this bridge is implicated in subunit movement. Contacts the P site tRNA; the 5S rRNA and some of its associated proteins might help stabilize positioning of ribosome-bound tRNAs.</text>
</comment>
<comment type="subunit">
    <text evidence="1">Part of the 50S ribosomal subunit; part of the 5S rRNA/L5/L18/L25 subcomplex. Contacts the 5S rRNA and the P site tRNA. Forms a bridge to the 30S subunit in the 70S ribosome.</text>
</comment>
<comment type="similarity">
    <text evidence="1">Belongs to the universal ribosomal protein uL5 family.</text>
</comment>
<organism>
    <name type="scientific">Streptococcus pneumoniae serotype 2 (strain D39 / NCTC 7466)</name>
    <dbReference type="NCBI Taxonomy" id="373153"/>
    <lineage>
        <taxon>Bacteria</taxon>
        <taxon>Bacillati</taxon>
        <taxon>Bacillota</taxon>
        <taxon>Bacilli</taxon>
        <taxon>Lactobacillales</taxon>
        <taxon>Streptococcaceae</taxon>
        <taxon>Streptococcus</taxon>
    </lineage>
</organism>